<reference key="1">
    <citation type="journal article" date="2005" name="BMC Genomics">
        <title>Characterization of 954 bovine full-CDS cDNA sequences.</title>
        <authorList>
            <person name="Harhay G.P."/>
            <person name="Sonstegard T.S."/>
            <person name="Keele J.W."/>
            <person name="Heaton M.P."/>
            <person name="Clawson M.L."/>
            <person name="Snelling W.M."/>
            <person name="Wiedmann R.T."/>
            <person name="Van Tassell C.P."/>
            <person name="Smith T.P.L."/>
        </authorList>
    </citation>
    <scope>NUCLEOTIDE SEQUENCE [LARGE SCALE MRNA]</scope>
</reference>
<reference key="2">
    <citation type="submission" date="2005-08" db="EMBL/GenBank/DDBJ databases">
        <authorList>
            <consortium name="NIH - Mammalian Gene Collection (MGC) project"/>
        </authorList>
    </citation>
    <scope>NUCLEOTIDE SEQUENCE [LARGE SCALE MRNA]</scope>
    <source>
        <strain>Crossbred X Angus</strain>
        <tissue>Ileum</tissue>
    </source>
</reference>
<keyword id="KW-0007">Acetylation</keyword>
<keyword id="KW-0010">Activator</keyword>
<keyword id="KW-0175">Coiled coil</keyword>
<keyword id="KW-0238">DNA-binding</keyword>
<keyword id="KW-1017">Isopeptide bond</keyword>
<keyword id="KW-0479">Metal-binding</keyword>
<keyword id="KW-0539">Nucleus</keyword>
<keyword id="KW-0597">Phosphoprotein</keyword>
<keyword id="KW-1185">Reference proteome</keyword>
<keyword id="KW-0804">Transcription</keyword>
<keyword id="KW-0805">Transcription regulation</keyword>
<keyword id="KW-0832">Ubl conjugation</keyword>
<keyword id="KW-0862">Zinc</keyword>
<keyword id="KW-0863">Zinc-finger</keyword>
<organism>
    <name type="scientific">Bos taurus</name>
    <name type="common">Bovine</name>
    <dbReference type="NCBI Taxonomy" id="9913"/>
    <lineage>
        <taxon>Eukaryota</taxon>
        <taxon>Metazoa</taxon>
        <taxon>Chordata</taxon>
        <taxon>Craniata</taxon>
        <taxon>Vertebrata</taxon>
        <taxon>Euteleostomi</taxon>
        <taxon>Mammalia</taxon>
        <taxon>Eutheria</taxon>
        <taxon>Laurasiatheria</taxon>
        <taxon>Artiodactyla</taxon>
        <taxon>Ruminantia</taxon>
        <taxon>Pecora</taxon>
        <taxon>Bovidae</taxon>
        <taxon>Bovinae</taxon>
        <taxon>Bos</taxon>
    </lineage>
</organism>
<gene>
    <name type="primary">CXXC1</name>
</gene>
<comment type="function">
    <text evidence="1">Transcriptional activator that exhibits a unique DNA binding specificity for CpG unmethylated motifs with a preference for CpGG.</text>
</comment>
<comment type="subunit">
    <text evidence="1 2">Component of the SET1 complex, at least composed of the catalytic subunit (SETD1A or SETD1B), WDR5, WDR82, RBBP5, ASH2L/ASH2, CXXC1/CFP1, HCFC1 and DPY30. Interacts with SETD1A (By similarity). Interacts with ZNF335 (By similarity). Interacts with PRDM9; this interaction does not link PRDM9-activated recombination hotspot sites with DSB machinery and is not required for the hotspot recognition pathway. Interacts with histone H3K4me3 (By similarity).</text>
</comment>
<comment type="subcellular location">
    <subcellularLocation>
        <location evidence="3">Nucleus speckle</location>
    </subcellularLocation>
    <subcellularLocation>
        <location evidence="2">Nucleus</location>
    </subcellularLocation>
    <text evidence="3">Associated with euchromatin. During mitosis, excluded from condensed chromosomes (By similarity).</text>
</comment>
<comment type="domain">
    <text evidence="1">The acidic domain carries the potential to activate transcription.</text>
</comment>
<comment type="PTM">
    <text evidence="1">May be regulated by proteolysis.</text>
</comment>
<protein>
    <recommendedName>
        <fullName>CXXC-type zinc finger protein 1</fullName>
    </recommendedName>
    <alternativeName>
        <fullName>CpG-binding protein</fullName>
    </alternativeName>
    <alternativeName>
        <fullName>PHD finger and CXXC domain-containing protein 1</fullName>
    </alternativeName>
</protein>
<dbReference type="EMBL" id="BT020741">
    <property type="protein sequence ID" value="AAX08758.1"/>
    <property type="molecule type" value="mRNA"/>
</dbReference>
<dbReference type="EMBL" id="BC102763">
    <property type="protein sequence ID" value="AAI02764.1"/>
    <property type="molecule type" value="mRNA"/>
</dbReference>
<dbReference type="RefSeq" id="NP_001019688.1">
    <property type="nucleotide sequence ID" value="NM_001024517.1"/>
</dbReference>
<dbReference type="SMR" id="Q5EA28"/>
<dbReference type="FunCoup" id="Q5EA28">
    <property type="interactions" value="4315"/>
</dbReference>
<dbReference type="STRING" id="9913.ENSBTAP00000029172"/>
<dbReference type="PaxDb" id="9913-ENSBTAP00000029172"/>
<dbReference type="Ensembl" id="ENSBTAT00000029172.5">
    <property type="protein sequence ID" value="ENSBTAP00000029172.3"/>
    <property type="gene ID" value="ENSBTAG00000021884.5"/>
</dbReference>
<dbReference type="GeneID" id="511446"/>
<dbReference type="KEGG" id="bta:511446"/>
<dbReference type="CTD" id="30827"/>
<dbReference type="VEuPathDB" id="HostDB:ENSBTAG00000021884"/>
<dbReference type="VGNC" id="VGNC:27859">
    <property type="gene designation" value="CXXC1"/>
</dbReference>
<dbReference type="eggNOG" id="KOG1632">
    <property type="taxonomic scope" value="Eukaryota"/>
</dbReference>
<dbReference type="GeneTree" id="ENSGT00730000111044"/>
<dbReference type="HOGENOM" id="CLU_025011_2_0_1"/>
<dbReference type="InParanoid" id="Q5EA28"/>
<dbReference type="OMA" id="IRVGHKP"/>
<dbReference type="OrthoDB" id="419183at2759"/>
<dbReference type="TreeFam" id="TF320326"/>
<dbReference type="Reactome" id="R-BTA-9772755">
    <property type="pathway name" value="Formation of WDR5-containing histone-modifying complexes"/>
</dbReference>
<dbReference type="Proteomes" id="UP000009136">
    <property type="component" value="Chromosome 24"/>
</dbReference>
<dbReference type="Bgee" id="ENSBTAG00000021884">
    <property type="expression patterns" value="Expressed in retina and 106 other cell types or tissues"/>
</dbReference>
<dbReference type="GO" id="GO:0005829">
    <property type="term" value="C:cytosol"/>
    <property type="evidence" value="ECO:0007669"/>
    <property type="project" value="Ensembl"/>
</dbReference>
<dbReference type="GO" id="GO:0016363">
    <property type="term" value="C:nuclear matrix"/>
    <property type="evidence" value="ECO:0007669"/>
    <property type="project" value="Ensembl"/>
</dbReference>
<dbReference type="GO" id="GO:0016607">
    <property type="term" value="C:nuclear speck"/>
    <property type="evidence" value="ECO:0007669"/>
    <property type="project" value="UniProtKB-SubCell"/>
</dbReference>
<dbReference type="GO" id="GO:0005634">
    <property type="term" value="C:nucleus"/>
    <property type="evidence" value="ECO:0000250"/>
    <property type="project" value="UniProtKB"/>
</dbReference>
<dbReference type="GO" id="GO:0048188">
    <property type="term" value="C:Set1C/COMPASS complex"/>
    <property type="evidence" value="ECO:0000250"/>
    <property type="project" value="UniProtKB"/>
</dbReference>
<dbReference type="GO" id="GO:0140002">
    <property type="term" value="F:histone H3K4me3 reader activity"/>
    <property type="evidence" value="ECO:0007669"/>
    <property type="project" value="Ensembl"/>
</dbReference>
<dbReference type="GO" id="GO:0035064">
    <property type="term" value="F:methylated histone binding"/>
    <property type="evidence" value="ECO:0000318"/>
    <property type="project" value="GO_Central"/>
</dbReference>
<dbReference type="GO" id="GO:0045322">
    <property type="term" value="F:unmethylated CpG binding"/>
    <property type="evidence" value="ECO:0007669"/>
    <property type="project" value="Ensembl"/>
</dbReference>
<dbReference type="GO" id="GO:0008270">
    <property type="term" value="F:zinc ion binding"/>
    <property type="evidence" value="ECO:0007669"/>
    <property type="project" value="UniProtKB-KW"/>
</dbReference>
<dbReference type="GO" id="GO:0045893">
    <property type="term" value="P:positive regulation of DNA-templated transcription"/>
    <property type="evidence" value="ECO:0000318"/>
    <property type="project" value="GO_Central"/>
</dbReference>
<dbReference type="CDD" id="cd15553">
    <property type="entry name" value="PHD_Cfp1"/>
    <property type="match status" value="1"/>
</dbReference>
<dbReference type="FunFam" id="3.30.40.10:FF:000138">
    <property type="entry name" value="CXXC-type zinc finger protein 1"/>
    <property type="match status" value="1"/>
</dbReference>
<dbReference type="Gene3D" id="3.30.40.10">
    <property type="entry name" value="Zinc/RING finger domain, C3HC4 (zinc finger)"/>
    <property type="match status" value="1"/>
</dbReference>
<dbReference type="InterPro" id="IPR022056">
    <property type="entry name" value="CpG-bd_C"/>
</dbReference>
<dbReference type="InterPro" id="IPR037869">
    <property type="entry name" value="Spp1/CFP1"/>
</dbReference>
<dbReference type="InterPro" id="IPR019786">
    <property type="entry name" value="Zinc_finger_PHD-type_CS"/>
</dbReference>
<dbReference type="InterPro" id="IPR002857">
    <property type="entry name" value="Znf_CXXC"/>
</dbReference>
<dbReference type="InterPro" id="IPR011011">
    <property type="entry name" value="Znf_FYVE_PHD"/>
</dbReference>
<dbReference type="InterPro" id="IPR001965">
    <property type="entry name" value="Znf_PHD"/>
</dbReference>
<dbReference type="InterPro" id="IPR019787">
    <property type="entry name" value="Znf_PHD-finger"/>
</dbReference>
<dbReference type="InterPro" id="IPR013083">
    <property type="entry name" value="Znf_RING/FYVE/PHD"/>
</dbReference>
<dbReference type="PANTHER" id="PTHR46174">
    <property type="entry name" value="CXXC-TYPE ZINC FINGER PROTEIN 1"/>
    <property type="match status" value="1"/>
</dbReference>
<dbReference type="PANTHER" id="PTHR46174:SF1">
    <property type="entry name" value="CXXC-TYPE ZINC FINGER PROTEIN 1"/>
    <property type="match status" value="1"/>
</dbReference>
<dbReference type="Pfam" id="PF12269">
    <property type="entry name" value="CpG_bind_C"/>
    <property type="match status" value="1"/>
</dbReference>
<dbReference type="Pfam" id="PF00628">
    <property type="entry name" value="PHD"/>
    <property type="match status" value="1"/>
</dbReference>
<dbReference type="Pfam" id="PF02008">
    <property type="entry name" value="zf-CXXC"/>
    <property type="match status" value="1"/>
</dbReference>
<dbReference type="SMART" id="SM00249">
    <property type="entry name" value="PHD"/>
    <property type="match status" value="1"/>
</dbReference>
<dbReference type="SUPFAM" id="SSF57903">
    <property type="entry name" value="FYVE/PHD zinc finger"/>
    <property type="match status" value="1"/>
</dbReference>
<dbReference type="PROSITE" id="PS51058">
    <property type="entry name" value="ZF_CXXC"/>
    <property type="match status" value="1"/>
</dbReference>
<dbReference type="PROSITE" id="PS01359">
    <property type="entry name" value="ZF_PHD_1"/>
    <property type="match status" value="1"/>
</dbReference>
<dbReference type="PROSITE" id="PS50016">
    <property type="entry name" value="ZF_PHD_2"/>
    <property type="match status" value="1"/>
</dbReference>
<proteinExistence type="evidence at transcript level"/>
<feature type="chain" id="PRO_0000283720" description="CXXC-type zinc finger protein 1">
    <location>
        <begin position="1"/>
        <end position="658"/>
    </location>
</feature>
<feature type="zinc finger region" description="PHD-type" evidence="5">
    <location>
        <begin position="28"/>
        <end position="76"/>
    </location>
</feature>
<feature type="zinc finger region" description="CXXC-type" evidence="6">
    <location>
        <begin position="162"/>
        <end position="211"/>
    </location>
</feature>
<feature type="region of interest" description="Disordered" evidence="7">
    <location>
        <begin position="1"/>
        <end position="20"/>
    </location>
</feature>
<feature type="region of interest" description="Disordered" evidence="7">
    <location>
        <begin position="84"/>
        <end position="164"/>
    </location>
</feature>
<feature type="region of interest" description="Disordered" evidence="7">
    <location>
        <begin position="221"/>
        <end position="285"/>
    </location>
</feature>
<feature type="region of interest" description="Disordered" evidence="7">
    <location>
        <begin position="327"/>
        <end position="373"/>
    </location>
</feature>
<feature type="coiled-coil region" evidence="4">
    <location>
        <begin position="428"/>
        <end position="470"/>
    </location>
</feature>
<feature type="compositionally biased region" description="Acidic residues" evidence="7">
    <location>
        <begin position="1"/>
        <end position="14"/>
    </location>
</feature>
<feature type="compositionally biased region" description="Basic and acidic residues" evidence="7">
    <location>
        <begin position="90"/>
        <end position="120"/>
    </location>
</feature>
<feature type="compositionally biased region" description="Low complexity" evidence="7">
    <location>
        <begin position="153"/>
        <end position="163"/>
    </location>
</feature>
<feature type="compositionally biased region" description="Basic residues" evidence="7">
    <location>
        <begin position="327"/>
        <end position="336"/>
    </location>
</feature>
<feature type="compositionally biased region" description="Basic and acidic residues" evidence="7">
    <location>
        <begin position="337"/>
        <end position="347"/>
    </location>
</feature>
<feature type="compositionally biased region" description="Basic residues" evidence="7">
    <location>
        <begin position="348"/>
        <end position="360"/>
    </location>
</feature>
<feature type="compositionally biased region" description="Basic and acidic residues" evidence="7">
    <location>
        <begin position="361"/>
        <end position="370"/>
    </location>
</feature>
<feature type="binding site" evidence="6">
    <location>
        <position position="171"/>
    </location>
    <ligand>
        <name>Zn(2+)</name>
        <dbReference type="ChEBI" id="CHEBI:29105"/>
        <label>1</label>
    </ligand>
</feature>
<feature type="binding site" evidence="6">
    <location>
        <position position="174"/>
    </location>
    <ligand>
        <name>Zn(2+)</name>
        <dbReference type="ChEBI" id="CHEBI:29105"/>
        <label>1</label>
    </ligand>
</feature>
<feature type="binding site" evidence="6">
    <location>
        <position position="177"/>
    </location>
    <ligand>
        <name>Zn(2+)</name>
        <dbReference type="ChEBI" id="CHEBI:29105"/>
        <label>1</label>
    </ligand>
</feature>
<feature type="binding site" evidence="6">
    <location>
        <position position="183"/>
    </location>
    <ligand>
        <name>Zn(2+)</name>
        <dbReference type="ChEBI" id="CHEBI:29105"/>
        <label>2</label>
    </ligand>
</feature>
<feature type="binding site" evidence="6">
    <location>
        <position position="186"/>
    </location>
    <ligand>
        <name>Zn(2+)</name>
        <dbReference type="ChEBI" id="CHEBI:29105"/>
        <label>2</label>
    </ligand>
</feature>
<feature type="binding site" evidence="6">
    <location>
        <position position="189"/>
    </location>
    <ligand>
        <name>Zn(2+)</name>
        <dbReference type="ChEBI" id="CHEBI:29105"/>
        <label>2</label>
    </ligand>
</feature>
<feature type="binding site" evidence="6">
    <location>
        <position position="205"/>
    </location>
    <ligand>
        <name>Zn(2+)</name>
        <dbReference type="ChEBI" id="CHEBI:29105"/>
        <label>2</label>
    </ligand>
</feature>
<feature type="binding site" evidence="6">
    <location>
        <position position="210"/>
    </location>
    <ligand>
        <name>Zn(2+)</name>
        <dbReference type="ChEBI" id="CHEBI:29105"/>
        <label>1</label>
    </ligand>
</feature>
<feature type="modified residue" description="N-acetylmethionine" evidence="3">
    <location>
        <position position="1"/>
    </location>
</feature>
<feature type="modified residue" description="Phosphoserine" evidence="3">
    <location>
        <position position="6"/>
    </location>
</feature>
<feature type="modified residue" description="Phosphoserine" evidence="3">
    <location>
        <position position="19"/>
    </location>
</feature>
<feature type="modified residue" description="Phosphoserine" evidence="3">
    <location>
        <position position="226"/>
    </location>
</feature>
<feature type="modified residue" description="Phosphothreonine" evidence="3">
    <location>
        <position position="229"/>
    </location>
</feature>
<feature type="cross-link" description="Glycyl lysine isopeptide (Lys-Gly) (interchain with G-Cter in SUMO2)" evidence="3">
    <location>
        <position position="252"/>
    </location>
</feature>
<name>CXXC1_BOVIN</name>
<evidence type="ECO:0000250" key="1"/>
<evidence type="ECO:0000250" key="2">
    <source>
        <dbReference type="UniProtKB" id="Q9CWW7"/>
    </source>
</evidence>
<evidence type="ECO:0000250" key="3">
    <source>
        <dbReference type="UniProtKB" id="Q9P0U4"/>
    </source>
</evidence>
<evidence type="ECO:0000255" key="4"/>
<evidence type="ECO:0000255" key="5">
    <source>
        <dbReference type="PROSITE-ProRule" id="PRU00146"/>
    </source>
</evidence>
<evidence type="ECO:0000255" key="6">
    <source>
        <dbReference type="PROSITE-ProRule" id="PRU00509"/>
    </source>
</evidence>
<evidence type="ECO:0000256" key="7">
    <source>
        <dbReference type="SAM" id="MobiDB-lite"/>
    </source>
</evidence>
<sequence length="658" mass="75870">MEGDASDPEPPDAGEDSKSENGENAPIYCICRKPDINCFMIGCDNCNEWFHGDCIRITEKMAKAIREWYCRECREKDPKLEIRYRHKKSRERDSSERDGSEPRDEGGGRKRPAPDPDLQRRAGAGTGVGAMLARGSASPHKSSPQPLVATPSQHHQQQQQQQQIKRSARMCGECEACRRTEDCGHCDFCRDMKKFGGPNKIRQKCRLRQCQLRARESYKYFPSSLSPVTPSESLPRPRRPLPTQPQPQPSQKLGRLREDEGAVASAAVKEPPEATATPEPLSDEDLPLDSELYQDFCAGAFDDHSLPWMSDTEESQFLDPALRKRAVKVKHVKRREKKSEKKKDERYKRHRQKQKHKDKWKHPERADAKDPASLPQCLGPGCVRAAQPGSKYCSDDCGMKLAANRIYEILPQRIQQWQQSPCIAEEHGKKLLERIRREQQSARTRLQEMERRFHELEAIILRAKQQAVREDEESNEGDSDDTDLQIFCVSCGHPINPRVALRHMERCYAKYESQTSFGSMYPTRIEGATRLFCDVYNPQSKTYCKRLQVLCPEHSRDPKVPADEVCGCPLVRDVFELTGDFCRLPKRQCNRHYCWEKLRRAEVDLERVRVWYKLDELFEQERNVRTAMTNRAGLLALMLHQTIQHDPLTTDLRSNAER</sequence>
<accession>Q5EA28</accession>